<keyword id="KW-0249">Electron transport</keyword>
<keyword id="KW-0472">Membrane</keyword>
<keyword id="KW-0602">Photosynthesis</keyword>
<keyword id="KW-0793">Thylakoid</keyword>
<keyword id="KW-0812">Transmembrane</keyword>
<keyword id="KW-1133">Transmembrane helix</keyword>
<keyword id="KW-0813">Transport</keyword>
<feature type="chain" id="PRO_0000216414" description="Cytochrome b6-f complex subunit 5">
    <location>
        <begin position="1"/>
        <end position="39"/>
    </location>
</feature>
<feature type="transmembrane region" description="Helical" evidence="1">
    <location>
        <begin position="5"/>
        <end position="25"/>
    </location>
</feature>
<organism>
    <name type="scientific">Prochlorococcus marinus subsp. pastoris (strain CCMP1986 / NIES-2087 / MED4)</name>
    <dbReference type="NCBI Taxonomy" id="59919"/>
    <lineage>
        <taxon>Bacteria</taxon>
        <taxon>Bacillati</taxon>
        <taxon>Cyanobacteriota</taxon>
        <taxon>Cyanophyceae</taxon>
        <taxon>Synechococcales</taxon>
        <taxon>Prochlorococcaceae</taxon>
        <taxon>Prochlorococcus</taxon>
    </lineage>
</organism>
<evidence type="ECO:0000255" key="1">
    <source>
        <dbReference type="HAMAP-Rule" id="MF_00432"/>
    </source>
</evidence>
<reference key="1">
    <citation type="journal article" date="2003" name="Nature">
        <title>Genome divergence in two Prochlorococcus ecotypes reflects oceanic niche differentiation.</title>
        <authorList>
            <person name="Rocap G."/>
            <person name="Larimer F.W."/>
            <person name="Lamerdin J.E."/>
            <person name="Malfatti S."/>
            <person name="Chain P."/>
            <person name="Ahlgren N.A."/>
            <person name="Arellano A."/>
            <person name="Coleman M."/>
            <person name="Hauser L."/>
            <person name="Hess W.R."/>
            <person name="Johnson Z.I."/>
            <person name="Land M.L."/>
            <person name="Lindell D."/>
            <person name="Post A.F."/>
            <person name="Regala W."/>
            <person name="Shah M."/>
            <person name="Shaw S.L."/>
            <person name="Steglich C."/>
            <person name="Sullivan M.B."/>
            <person name="Ting C.S."/>
            <person name="Tolonen A."/>
            <person name="Webb E.A."/>
            <person name="Zinser E.R."/>
            <person name="Chisholm S.W."/>
        </authorList>
    </citation>
    <scope>NUCLEOTIDE SEQUENCE [LARGE SCALE GENOMIC DNA]</scope>
    <source>
        <strain>CCMP1986 / NIES-2087 / MED4</strain>
    </source>
</reference>
<name>PETG_PROMP</name>
<sequence>MIEPLLCGIVLGLVPITLLGLFVSAWNQYRRGSGMLDMD</sequence>
<gene>
    <name evidence="1" type="primary">petG</name>
    <name type="ordered locus">PMM1058</name>
</gene>
<accession>Q7V129</accession>
<protein>
    <recommendedName>
        <fullName evidence="1">Cytochrome b6-f complex subunit 5</fullName>
    </recommendedName>
    <alternativeName>
        <fullName evidence="1">Cytochrome b6-f complex subunit PetG</fullName>
    </alternativeName>
    <alternativeName>
        <fullName evidence="1">Cytochrome b6-f complex subunit V</fullName>
    </alternativeName>
</protein>
<proteinExistence type="inferred from homology"/>
<comment type="function">
    <text evidence="1">Component of the cytochrome b6-f complex, which mediates electron transfer between photosystem II (PSII) and photosystem I (PSI), cyclic electron flow around PSI, and state transitions. PetG is required for either the stability or assembly of the cytochrome b6-f complex.</text>
</comment>
<comment type="subunit">
    <text evidence="1">The 4 large subunits of the cytochrome b6-f complex are cytochrome b6, subunit IV (17 kDa polypeptide, PetD), cytochrome f and the Rieske protein, while the 4 small subunits are PetG, PetL, PetM and PetN. The complex functions as a dimer.</text>
</comment>
<comment type="subcellular location">
    <subcellularLocation>
        <location evidence="1">Cellular thylakoid membrane</location>
        <topology evidence="1">Single-pass membrane protein</topology>
    </subcellularLocation>
</comment>
<comment type="similarity">
    <text evidence="1">Belongs to the PetG family.</text>
</comment>
<dbReference type="EMBL" id="BX548174">
    <property type="protein sequence ID" value="CAE19517.1"/>
    <property type="molecule type" value="Genomic_DNA"/>
</dbReference>
<dbReference type="RefSeq" id="WP_011132691.1">
    <property type="nucleotide sequence ID" value="NC_005072.1"/>
</dbReference>
<dbReference type="SMR" id="Q7V129"/>
<dbReference type="STRING" id="59919.PMM1058"/>
<dbReference type="KEGG" id="pmm:PMM1058"/>
<dbReference type="HOGENOM" id="CLU_216962_0_0_3"/>
<dbReference type="OrthoDB" id="428448at2"/>
<dbReference type="Proteomes" id="UP000001026">
    <property type="component" value="Chromosome"/>
</dbReference>
<dbReference type="GO" id="GO:0009512">
    <property type="term" value="C:cytochrome b6f complex"/>
    <property type="evidence" value="ECO:0007669"/>
    <property type="project" value="InterPro"/>
</dbReference>
<dbReference type="GO" id="GO:0031676">
    <property type="term" value="C:plasma membrane-derived thylakoid membrane"/>
    <property type="evidence" value="ECO:0007669"/>
    <property type="project" value="UniProtKB-SubCell"/>
</dbReference>
<dbReference type="GO" id="GO:0045158">
    <property type="term" value="F:electron transporter, transferring electrons within cytochrome b6/f complex of photosystem II activity"/>
    <property type="evidence" value="ECO:0007669"/>
    <property type="project" value="UniProtKB-UniRule"/>
</dbReference>
<dbReference type="GO" id="GO:0017004">
    <property type="term" value="P:cytochrome complex assembly"/>
    <property type="evidence" value="ECO:0007669"/>
    <property type="project" value="UniProtKB-UniRule"/>
</dbReference>
<dbReference type="GO" id="GO:0015979">
    <property type="term" value="P:photosynthesis"/>
    <property type="evidence" value="ECO:0007669"/>
    <property type="project" value="UniProtKB-KW"/>
</dbReference>
<dbReference type="HAMAP" id="MF_00432">
    <property type="entry name" value="Cytb6_f_PetG"/>
    <property type="match status" value="1"/>
</dbReference>
<dbReference type="InterPro" id="IPR003683">
    <property type="entry name" value="Cyt_6/f_cplx_su5"/>
</dbReference>
<dbReference type="InterPro" id="IPR036099">
    <property type="entry name" value="Cyt_6/f_cplx_su5_sf"/>
</dbReference>
<dbReference type="NCBIfam" id="NF001907">
    <property type="entry name" value="PRK00665.1"/>
    <property type="match status" value="1"/>
</dbReference>
<dbReference type="Pfam" id="PF02529">
    <property type="entry name" value="PetG"/>
    <property type="match status" value="1"/>
</dbReference>
<dbReference type="PIRSF" id="PIRSF000034">
    <property type="entry name" value="Cyt_b6-f_V"/>
    <property type="match status" value="1"/>
</dbReference>
<dbReference type="SUPFAM" id="SSF103446">
    <property type="entry name" value="PetG subunit of the cytochrome b6f complex"/>
    <property type="match status" value="1"/>
</dbReference>